<dbReference type="EMBL" id="AB026651">
    <property type="protein sequence ID" value="BAB11301.1"/>
    <property type="molecule type" value="Genomic_DNA"/>
</dbReference>
<dbReference type="EMBL" id="CP002688">
    <property type="protein sequence ID" value="AED95002.1"/>
    <property type="molecule type" value="Genomic_DNA"/>
</dbReference>
<dbReference type="EMBL" id="CP002688">
    <property type="protein sequence ID" value="AED95003.1"/>
    <property type="molecule type" value="Genomic_DNA"/>
</dbReference>
<dbReference type="EMBL" id="AY050380">
    <property type="protein sequence ID" value="AAK91398.1"/>
    <property type="molecule type" value="mRNA"/>
</dbReference>
<dbReference type="EMBL" id="BT000491">
    <property type="protein sequence ID" value="AAN18060.1"/>
    <property type="molecule type" value="mRNA"/>
</dbReference>
<dbReference type="RefSeq" id="NP_199187.1">
    <property type="nucleotide sequence ID" value="NM_123740.5"/>
</dbReference>
<dbReference type="RefSeq" id="NP_851126.1">
    <property type="nucleotide sequence ID" value="NM_180795.3"/>
</dbReference>
<dbReference type="SMR" id="Q9FG90"/>
<dbReference type="FunCoup" id="Q9FG90">
    <property type="interactions" value="192"/>
</dbReference>
<dbReference type="STRING" id="3702.Q9FG90"/>
<dbReference type="PaxDb" id="3702-AT5G43740.2"/>
<dbReference type="ProteomicsDB" id="224331"/>
<dbReference type="EnsemblPlants" id="AT5G43740.1">
    <property type="protein sequence ID" value="AT5G43740.1"/>
    <property type="gene ID" value="AT5G43740"/>
</dbReference>
<dbReference type="EnsemblPlants" id="AT5G43740.2">
    <property type="protein sequence ID" value="AT5G43740.2"/>
    <property type="gene ID" value="AT5G43740"/>
</dbReference>
<dbReference type="GeneID" id="834394"/>
<dbReference type="Gramene" id="AT5G43740.1">
    <property type="protein sequence ID" value="AT5G43740.1"/>
    <property type="gene ID" value="AT5G43740"/>
</dbReference>
<dbReference type="Gramene" id="AT5G43740.2">
    <property type="protein sequence ID" value="AT5G43740.2"/>
    <property type="gene ID" value="AT5G43740"/>
</dbReference>
<dbReference type="KEGG" id="ath:AT5G43740"/>
<dbReference type="Araport" id="AT5G43740"/>
<dbReference type="TAIR" id="AT5G43740"/>
<dbReference type="eggNOG" id="KOG4658">
    <property type="taxonomic scope" value="Eukaryota"/>
</dbReference>
<dbReference type="HOGENOM" id="CLU_000427_4_0_1"/>
<dbReference type="InParanoid" id="Q9FG90"/>
<dbReference type="OMA" id="MEIKCLE"/>
<dbReference type="OrthoDB" id="664960at2759"/>
<dbReference type="PhylomeDB" id="Q9FG90"/>
<dbReference type="PRO" id="PR:Q9FG90"/>
<dbReference type="Proteomes" id="UP000006548">
    <property type="component" value="Chromosome 5"/>
</dbReference>
<dbReference type="ExpressionAtlas" id="Q9FG90">
    <property type="expression patterns" value="baseline and differential"/>
</dbReference>
<dbReference type="GO" id="GO:0043531">
    <property type="term" value="F:ADP binding"/>
    <property type="evidence" value="ECO:0007669"/>
    <property type="project" value="InterPro"/>
</dbReference>
<dbReference type="GO" id="GO:0005524">
    <property type="term" value="F:ATP binding"/>
    <property type="evidence" value="ECO:0007669"/>
    <property type="project" value="UniProtKB-KW"/>
</dbReference>
<dbReference type="GO" id="GO:0006952">
    <property type="term" value="P:defense response"/>
    <property type="evidence" value="ECO:0007669"/>
    <property type="project" value="UniProtKB-KW"/>
</dbReference>
<dbReference type="FunFam" id="3.80.10.10:FF:000834">
    <property type="entry name" value="Probable disease resistance protein At1g15890"/>
    <property type="match status" value="1"/>
</dbReference>
<dbReference type="FunFam" id="3.40.50.300:FF:001091">
    <property type="entry name" value="Probable disease resistance protein At1g61300"/>
    <property type="match status" value="1"/>
</dbReference>
<dbReference type="FunFam" id="1.10.10.10:FF:000322">
    <property type="entry name" value="Probable disease resistance protein At1g63360"/>
    <property type="match status" value="1"/>
</dbReference>
<dbReference type="FunFam" id="1.10.8.430:FF:000003">
    <property type="entry name" value="Probable disease resistance protein At5g66910"/>
    <property type="match status" value="1"/>
</dbReference>
<dbReference type="Gene3D" id="1.10.8.430">
    <property type="entry name" value="Helical domain of apoptotic protease-activating factors"/>
    <property type="match status" value="1"/>
</dbReference>
<dbReference type="Gene3D" id="3.40.50.300">
    <property type="entry name" value="P-loop containing nucleotide triphosphate hydrolases"/>
    <property type="match status" value="1"/>
</dbReference>
<dbReference type="Gene3D" id="3.80.10.10">
    <property type="entry name" value="Ribonuclease Inhibitor"/>
    <property type="match status" value="1"/>
</dbReference>
<dbReference type="Gene3D" id="1.10.10.10">
    <property type="entry name" value="Winged helix-like DNA-binding domain superfamily/Winged helix DNA-binding domain"/>
    <property type="match status" value="1"/>
</dbReference>
<dbReference type="InterPro" id="IPR042197">
    <property type="entry name" value="Apaf_helical"/>
</dbReference>
<dbReference type="InterPro" id="IPR032675">
    <property type="entry name" value="LRR_dom_sf"/>
</dbReference>
<dbReference type="InterPro" id="IPR055414">
    <property type="entry name" value="LRR_R13L4/SHOC2-like"/>
</dbReference>
<dbReference type="InterPro" id="IPR002182">
    <property type="entry name" value="NB-ARC"/>
</dbReference>
<dbReference type="InterPro" id="IPR027417">
    <property type="entry name" value="P-loop_NTPase"/>
</dbReference>
<dbReference type="InterPro" id="IPR050905">
    <property type="entry name" value="Plant_NBS-LRR"/>
</dbReference>
<dbReference type="InterPro" id="IPR036388">
    <property type="entry name" value="WH-like_DNA-bd_sf"/>
</dbReference>
<dbReference type="PANTHER" id="PTHR33463:SF220">
    <property type="entry name" value="NB-ARC DOMAIN-CONTAINING PROTEIN"/>
    <property type="match status" value="1"/>
</dbReference>
<dbReference type="PANTHER" id="PTHR33463">
    <property type="entry name" value="NB-ARC DOMAIN-CONTAINING PROTEIN-RELATED"/>
    <property type="match status" value="1"/>
</dbReference>
<dbReference type="Pfam" id="PF23598">
    <property type="entry name" value="LRR_14"/>
    <property type="match status" value="1"/>
</dbReference>
<dbReference type="Pfam" id="PF00931">
    <property type="entry name" value="NB-ARC"/>
    <property type="match status" value="1"/>
</dbReference>
<dbReference type="Pfam" id="PF23559">
    <property type="entry name" value="WH_DRP"/>
    <property type="match status" value="1"/>
</dbReference>
<dbReference type="PRINTS" id="PR00364">
    <property type="entry name" value="DISEASERSIST"/>
</dbReference>
<dbReference type="SUPFAM" id="SSF52058">
    <property type="entry name" value="L domain-like"/>
    <property type="match status" value="1"/>
</dbReference>
<dbReference type="SUPFAM" id="SSF52540">
    <property type="entry name" value="P-loop containing nucleoside triphosphate hydrolases"/>
    <property type="match status" value="1"/>
</dbReference>
<name>DRL33_ARATH</name>
<gene>
    <name type="ordered locus">At5g43740</name>
    <name type="ORF">MQD19.7</name>
</gene>
<accession>Q9FG90</accession>
<comment type="function">
    <text evidence="1">Probable disease resistance protein.</text>
</comment>
<comment type="domain">
    <text evidence="1">The LRR repeats probably act as specificity determinant of pathogen recognition.</text>
</comment>
<comment type="similarity">
    <text evidence="3">Belongs to the disease resistance NB-LRR family.</text>
</comment>
<comment type="online information" name="NIB-LRRS">
    <link uri="http://niblrrs.ucdavis.edu"/>
    <text>Functional and comparative genomics of disease resistance gene homologs</text>
</comment>
<proteinExistence type="evidence at transcript level"/>
<reference key="1">
    <citation type="submission" date="1999-04" db="EMBL/GenBank/DDBJ databases">
        <title>Structural analysis of Arabidopsis thaliana chromosome 5. XI.</title>
        <authorList>
            <person name="Kaneko T."/>
            <person name="Katoh T."/>
            <person name="Asamizu E."/>
            <person name="Sato S."/>
            <person name="Nakamura Y."/>
            <person name="Kotani H."/>
            <person name="Tabata S."/>
        </authorList>
    </citation>
    <scope>NUCLEOTIDE SEQUENCE [LARGE SCALE GENOMIC DNA]</scope>
    <source>
        <strain>cv. Columbia</strain>
    </source>
</reference>
<reference key="2">
    <citation type="journal article" date="2017" name="Plant J.">
        <title>Araport11: a complete reannotation of the Arabidopsis thaliana reference genome.</title>
        <authorList>
            <person name="Cheng C.Y."/>
            <person name="Krishnakumar V."/>
            <person name="Chan A.P."/>
            <person name="Thibaud-Nissen F."/>
            <person name="Schobel S."/>
            <person name="Town C.D."/>
        </authorList>
    </citation>
    <scope>GENOME REANNOTATION</scope>
    <source>
        <strain>cv. Columbia</strain>
    </source>
</reference>
<reference key="3">
    <citation type="journal article" date="2003" name="Science">
        <title>Empirical analysis of transcriptional activity in the Arabidopsis genome.</title>
        <authorList>
            <person name="Yamada K."/>
            <person name="Lim J."/>
            <person name="Dale J.M."/>
            <person name="Chen H."/>
            <person name="Shinn P."/>
            <person name="Palm C.J."/>
            <person name="Southwick A.M."/>
            <person name="Wu H.C."/>
            <person name="Kim C.J."/>
            <person name="Nguyen M."/>
            <person name="Pham P.K."/>
            <person name="Cheuk R.F."/>
            <person name="Karlin-Newmann G."/>
            <person name="Liu S.X."/>
            <person name="Lam B."/>
            <person name="Sakano H."/>
            <person name="Wu T."/>
            <person name="Yu G."/>
            <person name="Miranda M."/>
            <person name="Quach H.L."/>
            <person name="Tripp M."/>
            <person name="Chang C.H."/>
            <person name="Lee J.M."/>
            <person name="Toriumi M.J."/>
            <person name="Chan M.M."/>
            <person name="Tang C.C."/>
            <person name="Onodera C.S."/>
            <person name="Deng J.M."/>
            <person name="Akiyama K."/>
            <person name="Ansari Y."/>
            <person name="Arakawa T."/>
            <person name="Banh J."/>
            <person name="Banno F."/>
            <person name="Bowser L."/>
            <person name="Brooks S.Y."/>
            <person name="Carninci P."/>
            <person name="Chao Q."/>
            <person name="Choy N."/>
            <person name="Enju A."/>
            <person name="Goldsmith A.D."/>
            <person name="Gurjal M."/>
            <person name="Hansen N.F."/>
            <person name="Hayashizaki Y."/>
            <person name="Johnson-Hopson C."/>
            <person name="Hsuan V.W."/>
            <person name="Iida K."/>
            <person name="Karnes M."/>
            <person name="Khan S."/>
            <person name="Koesema E."/>
            <person name="Ishida J."/>
            <person name="Jiang P.X."/>
            <person name="Jones T."/>
            <person name="Kawai J."/>
            <person name="Kamiya A."/>
            <person name="Meyers C."/>
            <person name="Nakajima M."/>
            <person name="Narusaka M."/>
            <person name="Seki M."/>
            <person name="Sakurai T."/>
            <person name="Satou M."/>
            <person name="Tamse R."/>
            <person name="Vaysberg M."/>
            <person name="Wallender E.K."/>
            <person name="Wong C."/>
            <person name="Yamamura Y."/>
            <person name="Yuan S."/>
            <person name="Shinozaki K."/>
            <person name="Davis R.W."/>
            <person name="Theologis A."/>
            <person name="Ecker J.R."/>
        </authorList>
    </citation>
    <scope>NUCLEOTIDE SEQUENCE [LARGE SCALE MRNA]</scope>
    <source>
        <strain>cv. Columbia</strain>
    </source>
</reference>
<evidence type="ECO:0000250" key="1"/>
<evidence type="ECO:0000255" key="2"/>
<evidence type="ECO:0000305" key="3"/>
<organism>
    <name type="scientific">Arabidopsis thaliana</name>
    <name type="common">Mouse-ear cress</name>
    <dbReference type="NCBI Taxonomy" id="3702"/>
    <lineage>
        <taxon>Eukaryota</taxon>
        <taxon>Viridiplantae</taxon>
        <taxon>Streptophyta</taxon>
        <taxon>Embryophyta</taxon>
        <taxon>Tracheophyta</taxon>
        <taxon>Spermatophyta</taxon>
        <taxon>Magnoliopsida</taxon>
        <taxon>eudicotyledons</taxon>
        <taxon>Gunneridae</taxon>
        <taxon>Pentapetalae</taxon>
        <taxon>rosids</taxon>
        <taxon>malvids</taxon>
        <taxon>Brassicales</taxon>
        <taxon>Brassicaceae</taxon>
        <taxon>Camelineae</taxon>
        <taxon>Arabidopsis</taxon>
    </lineage>
</organism>
<keyword id="KW-0067">ATP-binding</keyword>
<keyword id="KW-0175">Coiled coil</keyword>
<keyword id="KW-0433">Leucine-rich repeat</keyword>
<keyword id="KW-0547">Nucleotide-binding</keyword>
<keyword id="KW-0611">Plant defense</keyword>
<keyword id="KW-1185">Reference proteome</keyword>
<keyword id="KW-0677">Repeat</keyword>
<sequence length="862" mass="98473">MLGWLVIPWNQIFTAACGCFLSDRNYIHMMESNLDALQKTMEELKNGRDDLLGRVSIEEDKGLQRLAQVNGWLSRVQIVESEFKDLLEAMSIETGRLCLLGYCSEDCISSYNYGEKVSKMLEEVKELLSKKDFRMVAQEIIHKVEKKLIQTTVGLDKLVEMAWSSLMNDEIGTLGLYGMGGVGKTTLLESLNNKFVELESEFDVVIWVVVSKDFQFEGIQDQILGRLRSDKEWERETESKKASLIYNNLERKKFVLLLDDLWSEVDMTKIGVPPPTRENGSKIVFTTRSTEVCKHMKADKQIKVACLSPDEAWELFRLTVGDIILRSHQDIPALARIVAAKCHGLPLALNVIGKAMSCKETIQEWSHAINVLNSAGHEFPGMEERILPILKFSYDSLKNGEIKLCFLYCSLFPEDSEIPKEKWIEYWICEGFINPNRYEDGGTNHGYDIIGLLVRAHLLIECELTDNVKMHDVIREMALWINSDFGKQQETICVKSGAHVRMIPNDINWEIVRTMSFTCTQIKKISCRSKCPNLSTLLILDNRLLVKISNRFFRFMPKLVVLDLSANLDLIKLPEEISNLGSLQYLNISLTGIKSLPVGLKKLRKLIYLNLEFTGVHGSLVGIAATLPNLQVLKFFYSCVYVDDILMKELQDLEHLKILTANVKDVTILERIQGDDRLASSIRSLCLEDMSTPRVILSTIALGGLQQLAILMCNISEIRIDWESKERRELSPTEILPSTGSPGFKQLSTVYINQLEGQRDLSWLLYAQNLKKLEVCWSPQIEEIINKEKGMNITKLHRDIVVPFGNLEDLALRQMADLTEICWNYRTLPNLRKSYINDCPKLPEDIFVPLLPEKSPSRFFFF</sequence>
<feature type="chain" id="PRO_0000212765" description="Probable disease resistance protein At5g43740">
    <location>
        <begin position="1"/>
        <end position="862"/>
    </location>
</feature>
<feature type="domain" description="NB-ARC">
    <location>
        <begin position="135"/>
        <end position="438"/>
    </location>
</feature>
<feature type="repeat" description="LRR 1">
    <location>
        <begin position="511"/>
        <end position="532"/>
    </location>
</feature>
<feature type="repeat" description="LRR 2">
    <location>
        <begin position="533"/>
        <end position="555"/>
    </location>
</feature>
<feature type="repeat" description="LRR 3">
    <location>
        <begin position="558"/>
        <end position="580"/>
    </location>
</feature>
<feature type="repeat" description="LRR 4">
    <location>
        <begin position="582"/>
        <end position="604"/>
    </location>
</feature>
<feature type="coiled-coil region" evidence="2">
    <location>
        <begin position="24"/>
        <end position="61"/>
    </location>
</feature>
<feature type="binding site" evidence="2">
    <location>
        <begin position="178"/>
        <end position="185"/>
    </location>
    <ligand>
        <name>ATP</name>
        <dbReference type="ChEBI" id="CHEBI:30616"/>
    </ligand>
</feature>
<protein>
    <recommendedName>
        <fullName>Probable disease resistance protein At5g43740</fullName>
    </recommendedName>
</protein>